<evidence type="ECO:0000250" key="1"/>
<evidence type="ECO:0000250" key="2">
    <source>
        <dbReference type="UniProtKB" id="Q15047"/>
    </source>
</evidence>
<evidence type="ECO:0000255" key="3"/>
<evidence type="ECO:0000255" key="4">
    <source>
        <dbReference type="PROSITE-ProRule" id="PRU00155"/>
    </source>
</evidence>
<evidence type="ECO:0000255" key="5">
    <source>
        <dbReference type="PROSITE-ProRule" id="PRU00157"/>
    </source>
</evidence>
<evidence type="ECO:0000255" key="6">
    <source>
        <dbReference type="PROSITE-ProRule" id="PRU00190"/>
    </source>
</evidence>
<evidence type="ECO:0000255" key="7">
    <source>
        <dbReference type="PROSITE-ProRule" id="PRU00338"/>
    </source>
</evidence>
<evidence type="ECO:0000255" key="8">
    <source>
        <dbReference type="PROSITE-ProRule" id="PRU00906"/>
    </source>
</evidence>
<evidence type="ECO:0000256" key="9">
    <source>
        <dbReference type="SAM" id="MobiDB-lite"/>
    </source>
</evidence>
<organism>
    <name type="scientific">Xenopus laevis</name>
    <name type="common">African clawed frog</name>
    <dbReference type="NCBI Taxonomy" id="8355"/>
    <lineage>
        <taxon>Eukaryota</taxon>
        <taxon>Metazoa</taxon>
        <taxon>Chordata</taxon>
        <taxon>Craniata</taxon>
        <taxon>Vertebrata</taxon>
        <taxon>Euteleostomi</taxon>
        <taxon>Amphibia</taxon>
        <taxon>Batrachia</taxon>
        <taxon>Anura</taxon>
        <taxon>Pipoidea</taxon>
        <taxon>Pipidae</taxon>
        <taxon>Xenopodinae</taxon>
        <taxon>Xenopus</taxon>
        <taxon>Xenopus</taxon>
    </lineage>
</organism>
<accession>Q6INA9</accession>
<comment type="function">
    <text evidence="2">Histone methyltransferase that specifically trimethylates 'Lys-9' of histone H3. H3 'Lys-9' trimethylation represents a specific tag for epigenetic transcriptional repression by recruiting HP1 (CBX1, CBX3 and/or CBX5) proteins to methylated histones. Mainly functions in euchromatin regions, thereby playing a central role in the silencing of euchromatic genes. H3 'Lys-9' trimethylation is coordinated with DNA methylation. Plays a role in promoter hypermethylation and transcriptional silencing of tumor suppressor genes (TSGs) or other tumor-related genes. Also required to maintain a transcriptionally repressive state of genes in undifferentiated embryonic stem cells (ESCs). Associates at promoter regions of tumor suppressor genes (TSGs) leading to their gene silencing (By similarity).</text>
</comment>
<comment type="catalytic activity">
    <reaction evidence="8">
        <text>N(6),N(6)-dimethyl-L-lysyl(9)-[histone H3] + S-adenosyl-L-methionine = N(6),N(6),N(6)-trimethyl-L-lysyl(9)-[histone H3] + S-adenosyl-L-homocysteine + H(+)</text>
        <dbReference type="Rhea" id="RHEA:60288"/>
        <dbReference type="Rhea" id="RHEA-COMP:15538"/>
        <dbReference type="Rhea" id="RHEA-COMP:15541"/>
        <dbReference type="ChEBI" id="CHEBI:15378"/>
        <dbReference type="ChEBI" id="CHEBI:57856"/>
        <dbReference type="ChEBI" id="CHEBI:59789"/>
        <dbReference type="ChEBI" id="CHEBI:61961"/>
        <dbReference type="ChEBI" id="CHEBI:61976"/>
        <dbReference type="EC" id="2.1.1.366"/>
    </reaction>
</comment>
<comment type="subcellular location">
    <subcellularLocation>
        <location evidence="1">Nucleus</location>
    </subcellularLocation>
    <subcellularLocation>
        <location evidence="1">Chromosome</location>
    </subcellularLocation>
    <text evidence="1">Associated with non-pericentromeric regions of chromatin. Excluded from nucleoli and islands of condensed chromatin (By similarity).</text>
</comment>
<comment type="domain">
    <text evidence="1">In the pre-SET domain, Cys residues bind 3 zinc ions that are arranged in a triangular cluster; some of these Cys residues contribute to the binding of two zinc ions within the cluster.</text>
</comment>
<comment type="similarity">
    <text evidence="8">Belongs to the class V-like SAM-binding methyltransferase superfamily. Histone-lysine methyltransferase family. Suvar3-9 subfamily.</text>
</comment>
<dbReference type="EC" id="2.1.1.366"/>
<dbReference type="EMBL" id="BC072374">
    <property type="protein sequence ID" value="AAH72374.1"/>
    <property type="molecule type" value="mRNA"/>
</dbReference>
<dbReference type="RefSeq" id="NP_001085076.2">
    <property type="nucleotide sequence ID" value="NM_001091607.1"/>
</dbReference>
<dbReference type="SMR" id="Q6INA9"/>
<dbReference type="GeneID" id="432147"/>
<dbReference type="KEGG" id="xla:432147"/>
<dbReference type="AGR" id="Xenbase:XB-GENE-866480"/>
<dbReference type="CTD" id="432147"/>
<dbReference type="Xenbase" id="XB-GENE-866480">
    <property type="gene designation" value="setdb1.L"/>
</dbReference>
<dbReference type="OrthoDB" id="308383at2759"/>
<dbReference type="Proteomes" id="UP000186698">
    <property type="component" value="Chromosome 8L"/>
</dbReference>
<dbReference type="Bgee" id="432147">
    <property type="expression patterns" value="Expressed in ovary and 19 other cell types or tissues"/>
</dbReference>
<dbReference type="GO" id="GO:0005694">
    <property type="term" value="C:chromosome"/>
    <property type="evidence" value="ECO:0007669"/>
    <property type="project" value="UniProtKB-SubCell"/>
</dbReference>
<dbReference type="GO" id="GO:0005634">
    <property type="term" value="C:nucleus"/>
    <property type="evidence" value="ECO:0000318"/>
    <property type="project" value="GO_Central"/>
</dbReference>
<dbReference type="GO" id="GO:0003677">
    <property type="term" value="F:DNA binding"/>
    <property type="evidence" value="ECO:0007669"/>
    <property type="project" value="InterPro"/>
</dbReference>
<dbReference type="GO" id="GO:0046974">
    <property type="term" value="F:histone H3K9 methyltransferase activity"/>
    <property type="evidence" value="ECO:0000318"/>
    <property type="project" value="GO_Central"/>
</dbReference>
<dbReference type="GO" id="GO:0140948">
    <property type="term" value="F:histone H3K9 monomethyltransferase activity"/>
    <property type="evidence" value="ECO:0007669"/>
    <property type="project" value="RHEA"/>
</dbReference>
<dbReference type="GO" id="GO:0140947">
    <property type="term" value="F:histone H3K9me2 methyltransferase activity"/>
    <property type="evidence" value="ECO:0007669"/>
    <property type="project" value="UniProtKB-EC"/>
</dbReference>
<dbReference type="GO" id="GO:1990841">
    <property type="term" value="F:promoter-specific chromatin binding"/>
    <property type="evidence" value="ECO:0000250"/>
    <property type="project" value="UniProtKB"/>
</dbReference>
<dbReference type="GO" id="GO:0008270">
    <property type="term" value="F:zinc ion binding"/>
    <property type="evidence" value="ECO:0007669"/>
    <property type="project" value="InterPro"/>
</dbReference>
<dbReference type="GO" id="GO:0006346">
    <property type="term" value="P:DNA methylation-dependent constitutive heterochromatin formation"/>
    <property type="evidence" value="ECO:0000250"/>
    <property type="project" value="UniProtKB"/>
</dbReference>
<dbReference type="GO" id="GO:0070828">
    <property type="term" value="P:heterochromatin organization"/>
    <property type="evidence" value="ECO:0000318"/>
    <property type="project" value="GO_Central"/>
</dbReference>
<dbReference type="GO" id="GO:0032259">
    <property type="term" value="P:methylation"/>
    <property type="evidence" value="ECO:0007669"/>
    <property type="project" value="UniProtKB-KW"/>
</dbReference>
<dbReference type="GO" id="GO:0010629">
    <property type="term" value="P:negative regulation of gene expression"/>
    <property type="evidence" value="ECO:0000318"/>
    <property type="project" value="GO_Central"/>
</dbReference>
<dbReference type="CDD" id="cd01395">
    <property type="entry name" value="HMT_MBD"/>
    <property type="match status" value="1"/>
</dbReference>
<dbReference type="CDD" id="cd10517">
    <property type="entry name" value="SET_SETDB1"/>
    <property type="match status" value="1"/>
</dbReference>
<dbReference type="CDD" id="cd20382">
    <property type="entry name" value="Tudor_SETDB1_rpt1"/>
    <property type="match status" value="1"/>
</dbReference>
<dbReference type="CDD" id="cd21181">
    <property type="entry name" value="Tudor_SETDB1_rpt2"/>
    <property type="match status" value="1"/>
</dbReference>
<dbReference type="FunFam" id="2.170.270.10:FF:000017">
    <property type="entry name" value="Histone-lysine N-methyltransferase"/>
    <property type="match status" value="1"/>
</dbReference>
<dbReference type="FunFam" id="2.170.270.10:FF:000020">
    <property type="entry name" value="Histone-lysine N-methyltransferase"/>
    <property type="match status" value="1"/>
</dbReference>
<dbReference type="FunFam" id="2.30.30.140:FF:000034">
    <property type="entry name" value="Histone-lysine N-methyltransferase"/>
    <property type="match status" value="1"/>
</dbReference>
<dbReference type="FunFam" id="2.30.30.140:FF:000037">
    <property type="entry name" value="Histone-lysine N-methyltransferase"/>
    <property type="match status" value="1"/>
</dbReference>
<dbReference type="FunFam" id="2.30.30.140:FF:000054">
    <property type="entry name" value="Histone-lysine N-methyltransferase"/>
    <property type="match status" value="1"/>
</dbReference>
<dbReference type="Gene3D" id="2.30.30.140">
    <property type="match status" value="3"/>
</dbReference>
<dbReference type="Gene3D" id="2.170.270.10">
    <property type="entry name" value="SET domain"/>
    <property type="match status" value="2"/>
</dbReference>
<dbReference type="InterPro" id="IPR016177">
    <property type="entry name" value="DNA-bd_dom_sf"/>
</dbReference>
<dbReference type="InterPro" id="IPR040880">
    <property type="entry name" value="DUF5604"/>
</dbReference>
<dbReference type="InterPro" id="IPR025796">
    <property type="entry name" value="Hist-Lys_N-MeTrfase_SETDB1"/>
</dbReference>
<dbReference type="InterPro" id="IPR001739">
    <property type="entry name" value="Methyl_CpG_DNA-bd"/>
</dbReference>
<dbReference type="InterPro" id="IPR003616">
    <property type="entry name" value="Post-SET_dom"/>
</dbReference>
<dbReference type="InterPro" id="IPR007728">
    <property type="entry name" value="Pre-SET_dom"/>
</dbReference>
<dbReference type="InterPro" id="IPR001214">
    <property type="entry name" value="SET_dom"/>
</dbReference>
<dbReference type="InterPro" id="IPR046341">
    <property type="entry name" value="SET_dom_sf"/>
</dbReference>
<dbReference type="InterPro" id="IPR047232">
    <property type="entry name" value="SETDB1/2-like_MBD"/>
</dbReference>
<dbReference type="InterPro" id="IPR051516">
    <property type="entry name" value="SETDB_methyltransferase"/>
</dbReference>
<dbReference type="InterPro" id="IPR002999">
    <property type="entry name" value="Tudor"/>
</dbReference>
<dbReference type="InterPro" id="IPR041292">
    <property type="entry name" value="Tudor_4"/>
</dbReference>
<dbReference type="InterPro" id="IPR041291">
    <property type="entry name" value="TUDOR_5"/>
</dbReference>
<dbReference type="PANTHER" id="PTHR46024">
    <property type="entry name" value="HISTONE-LYSINE N-METHYLTRANSFERASE EGGLESS"/>
    <property type="match status" value="1"/>
</dbReference>
<dbReference type="PANTHER" id="PTHR46024:SF2">
    <property type="entry name" value="HISTONE-LYSINE N-METHYLTRANSFERASE SETDB1"/>
    <property type="match status" value="1"/>
</dbReference>
<dbReference type="Pfam" id="PF18300">
    <property type="entry name" value="DUF5604"/>
    <property type="match status" value="1"/>
</dbReference>
<dbReference type="Pfam" id="PF01429">
    <property type="entry name" value="MBD"/>
    <property type="match status" value="1"/>
</dbReference>
<dbReference type="Pfam" id="PF05033">
    <property type="entry name" value="Pre-SET"/>
    <property type="match status" value="1"/>
</dbReference>
<dbReference type="Pfam" id="PF00856">
    <property type="entry name" value="SET"/>
    <property type="match status" value="1"/>
</dbReference>
<dbReference type="Pfam" id="PF18358">
    <property type="entry name" value="Tudor_4"/>
    <property type="match status" value="1"/>
</dbReference>
<dbReference type="Pfam" id="PF18359">
    <property type="entry name" value="Tudor_5"/>
    <property type="match status" value="1"/>
</dbReference>
<dbReference type="SMART" id="SM00391">
    <property type="entry name" value="MBD"/>
    <property type="match status" value="1"/>
</dbReference>
<dbReference type="SMART" id="SM00468">
    <property type="entry name" value="PreSET"/>
    <property type="match status" value="1"/>
</dbReference>
<dbReference type="SMART" id="SM00317">
    <property type="entry name" value="SET"/>
    <property type="match status" value="1"/>
</dbReference>
<dbReference type="SMART" id="SM00333">
    <property type="entry name" value="TUDOR"/>
    <property type="match status" value="2"/>
</dbReference>
<dbReference type="SUPFAM" id="SSF54171">
    <property type="entry name" value="DNA-binding domain"/>
    <property type="match status" value="1"/>
</dbReference>
<dbReference type="SUPFAM" id="SSF82199">
    <property type="entry name" value="SET domain"/>
    <property type="match status" value="1"/>
</dbReference>
<dbReference type="PROSITE" id="PS50982">
    <property type="entry name" value="MBD"/>
    <property type="match status" value="1"/>
</dbReference>
<dbReference type="PROSITE" id="PS50868">
    <property type="entry name" value="POST_SET"/>
    <property type="match status" value="1"/>
</dbReference>
<dbReference type="PROSITE" id="PS50867">
    <property type="entry name" value="PRE_SET"/>
    <property type="match status" value="1"/>
</dbReference>
<dbReference type="PROSITE" id="PS51573">
    <property type="entry name" value="SAM_MT43_SUVAR39_1"/>
    <property type="match status" value="1"/>
</dbReference>
<dbReference type="PROSITE" id="PS50280">
    <property type="entry name" value="SET"/>
    <property type="match status" value="1"/>
</dbReference>
<gene>
    <name type="primary">setdb1</name>
</gene>
<sequence>MELEQMVVKELGISMDDLRELIDRELEKIEFVKQRKAQLLEMEQLVKQKEAEVDHVDKLFDNATRAVDDCETLVKSLYDQIGMTYKESSSEDEGSSKPTEVIEIPDEDDDDVMSVGSGEAVSKIPKEKHLLREAMAAMKRSRQDVQSIVEAIQKKSDGPQTRFSSHPSSPTSSVGGSNQASASNDMSKDGDLVVGMRILGKKRTKTWHKGTLISIQCVGTGKKFKVKFDNKGKSLLSGNHIAYDYHPPPENLTVGSRVVAKYKDGNQVWLYAGIVAEPPSSKNKMRYLIFFDDGYASYVTHAELYPVCRPWSKSWEDIEDVSCRDFIQEYVNAYPNRPMVLLKSGQLIKTEWEGTWWKSKVEEVDGSLVKILFLDDKRCEWIYRGSTRLEPMFSMKTSNASTQEKQQAGQQRTRPNVGAIRSKGPVVQFTHDLTGNEPEHNPAAPPSPQSMPSPQLIDTDSDSQQAQSKKQVAKKSTSFRPGSAGSGQSSPIPTESVPQPPAAPRPFQSNQSVQPVQSIQPIQPIHNIQTIQTIQGIQTIQAIQPIQSIQTLQPIQTIQPLQTIQTLQGNRIVTSIQQFQIIRTENIPAESTYKAPKEKLFYLPHVCNYTCLSRIRPLSHRGKNPLLVPLLYDFRRMTARRRVNRKMGFHVIYKSPCGLSLRTMPEIERYLFETQCKMLFLEMFCLDPYVLVDRKFQPQKPFYYIPDITYGKEDVMLSCVNEIDRTPPPQVAYSKERIPGKGVFINTGADYLVGCDCTDGCRDKSKCACHQLTIQATACTPGAQSNPMAGYQHKRLEECLPTGVYECNKRCKCSANMCNNRLVQHGLQVRLQLFKTQNKGWGIRGLDDIAKGSFVCIYAGKILTDDFADKEGLEMGDEYFANLDHIESVENFKEGYESDAKSSSDSSGVDLKEDHEENSGSEDQEESNDSSDDNFGKNEDITTSSVWRSYATRRTTRGQKENGTSETASKDSRTRDETTDCKLPEETSKNKVASWLSSNTMADSVMDSDSRSSLKMGEALETDKPKESEEASKYPRFAEGNRAYGYNPTPTKKDGVRRPVTKTALHQIKRQSSSAQPTEEVLTLSSSSDSEVGSGTNGSKKPAAQATANDSDDIQTISSGSDEEEEKKNVAASAGPVKRQVAVKSTRGFALKSTHGITVKSNMASGEGGPGRRNTRQFFDGEESCYIIDAKLEGNLGRYLNHSCSPNLFVQNVFVDTHDLRFPWVAFFASKRIRAGTELTWDYNYEVGSVEGKKLLCCCGSTECRGRLL</sequence>
<name>SETB1_XENLA</name>
<keyword id="KW-0156">Chromatin regulator</keyword>
<keyword id="KW-0158">Chromosome</keyword>
<keyword id="KW-0175">Coiled coil</keyword>
<keyword id="KW-0479">Metal-binding</keyword>
<keyword id="KW-0489">Methyltransferase</keyword>
<keyword id="KW-0539">Nucleus</keyword>
<keyword id="KW-1185">Reference proteome</keyword>
<keyword id="KW-0677">Repeat</keyword>
<keyword id="KW-0678">Repressor</keyword>
<keyword id="KW-0949">S-adenosyl-L-methionine</keyword>
<keyword id="KW-0804">Transcription</keyword>
<keyword id="KW-0805">Transcription regulation</keyword>
<keyword id="KW-0808">Transferase</keyword>
<keyword id="KW-0862">Zinc</keyword>
<proteinExistence type="evidence at transcript level"/>
<reference key="1">
    <citation type="submission" date="2004-06" db="EMBL/GenBank/DDBJ databases">
        <authorList>
            <consortium name="NIH - Xenopus Gene Collection (XGC) project"/>
        </authorList>
    </citation>
    <scope>NUCLEOTIDE SEQUENCE [LARGE SCALE MRNA]</scope>
    <source>
        <tissue>Oocyte</tissue>
    </source>
</reference>
<feature type="chain" id="PRO_0000281821" description="Histone-lysine N-methyltransferase SETDB1">
    <location>
        <begin position="1"/>
        <end position="1269"/>
    </location>
</feature>
<feature type="domain" description="Tudor 1">
    <location>
        <begin position="250"/>
        <end position="312"/>
    </location>
</feature>
<feature type="domain" description="Tudor 2">
    <location>
        <begin position="340"/>
        <end position="395"/>
    </location>
</feature>
<feature type="domain" description="MBD" evidence="7">
    <location>
        <begin position="620"/>
        <end position="691"/>
    </location>
</feature>
<feature type="domain" description="Pre-SET" evidence="5">
    <location>
        <begin position="753"/>
        <end position="826"/>
    </location>
</feature>
<feature type="domain" description="SET" evidence="6">
    <location>
        <begin position="829"/>
        <end position="1244"/>
    </location>
</feature>
<feature type="domain" description="Post-SET" evidence="4">
    <location>
        <begin position="1253"/>
        <end position="1269"/>
    </location>
</feature>
<feature type="region of interest" description="Disordered" evidence="9">
    <location>
        <begin position="85"/>
        <end position="121"/>
    </location>
</feature>
<feature type="region of interest" description="Disordered" evidence="9">
    <location>
        <begin position="153"/>
        <end position="188"/>
    </location>
</feature>
<feature type="region of interest" description="Disordered" evidence="9">
    <location>
        <begin position="396"/>
        <end position="516"/>
    </location>
</feature>
<feature type="region of interest" description="Disordered" evidence="9">
    <location>
        <begin position="894"/>
        <end position="1139"/>
    </location>
</feature>
<feature type="coiled-coil region" evidence="3">
    <location>
        <begin position="9"/>
        <end position="63"/>
    </location>
</feature>
<feature type="compositionally biased region" description="Acidic residues" evidence="9">
    <location>
        <begin position="103"/>
        <end position="112"/>
    </location>
</feature>
<feature type="compositionally biased region" description="Low complexity" evidence="9">
    <location>
        <begin position="164"/>
        <end position="177"/>
    </location>
</feature>
<feature type="compositionally biased region" description="Polar residues" evidence="9">
    <location>
        <begin position="396"/>
        <end position="414"/>
    </location>
</feature>
<feature type="compositionally biased region" description="Low complexity" evidence="9">
    <location>
        <begin position="462"/>
        <end position="476"/>
    </location>
</feature>
<feature type="compositionally biased region" description="Polar residues" evidence="9">
    <location>
        <begin position="486"/>
        <end position="497"/>
    </location>
</feature>
<feature type="compositionally biased region" description="Acidic residues" evidence="9">
    <location>
        <begin position="919"/>
        <end position="932"/>
    </location>
</feature>
<feature type="compositionally biased region" description="Basic and acidic residues" evidence="9">
    <location>
        <begin position="968"/>
        <end position="989"/>
    </location>
</feature>
<feature type="compositionally biased region" description="Basic and acidic residues" evidence="9">
    <location>
        <begin position="1021"/>
        <end position="1033"/>
    </location>
</feature>
<feature type="compositionally biased region" description="Low complexity" evidence="9">
    <location>
        <begin position="1078"/>
        <end position="1094"/>
    </location>
</feature>
<feature type="compositionally biased region" description="Polar residues" evidence="9">
    <location>
        <begin position="1106"/>
        <end position="1120"/>
    </location>
</feature>
<feature type="binding site" evidence="1">
    <location>
        <position position="755"/>
    </location>
    <ligand>
        <name>Zn(2+)</name>
        <dbReference type="ChEBI" id="CHEBI:29105"/>
        <label>1</label>
    </ligand>
</feature>
<feature type="binding site" evidence="1">
    <location>
        <position position="755"/>
    </location>
    <ligand>
        <name>Zn(2+)</name>
        <dbReference type="ChEBI" id="CHEBI:29105"/>
        <label>2</label>
    </ligand>
</feature>
<feature type="binding site" evidence="1">
    <location>
        <position position="757"/>
    </location>
    <ligand>
        <name>Zn(2+)</name>
        <dbReference type="ChEBI" id="CHEBI:29105"/>
        <label>1</label>
    </ligand>
</feature>
<feature type="binding site" evidence="1">
    <location>
        <position position="761"/>
    </location>
    <ligand>
        <name>Zn(2+)</name>
        <dbReference type="ChEBI" id="CHEBI:29105"/>
        <label>1</label>
    </ligand>
</feature>
<feature type="binding site" evidence="1">
    <location>
        <position position="761"/>
    </location>
    <ligand>
        <name>Zn(2+)</name>
        <dbReference type="ChEBI" id="CHEBI:29105"/>
        <label>3</label>
    </ligand>
</feature>
<feature type="binding site" evidence="1">
    <location>
        <position position="767"/>
    </location>
    <ligand>
        <name>Zn(2+)</name>
        <dbReference type="ChEBI" id="CHEBI:29105"/>
        <label>1</label>
    </ligand>
</feature>
<feature type="binding site" evidence="1">
    <location>
        <position position="769"/>
    </location>
    <ligand>
        <name>Zn(2+)</name>
        <dbReference type="ChEBI" id="CHEBI:29105"/>
        <label>2</label>
    </ligand>
</feature>
<feature type="binding site" evidence="1">
    <location>
        <position position="807"/>
    </location>
    <ligand>
        <name>Zn(2+)</name>
        <dbReference type="ChEBI" id="CHEBI:29105"/>
        <label>2</label>
    </ligand>
</feature>
<feature type="binding site" evidence="1">
    <location>
        <position position="807"/>
    </location>
    <ligand>
        <name>Zn(2+)</name>
        <dbReference type="ChEBI" id="CHEBI:29105"/>
        <label>3</label>
    </ligand>
</feature>
<feature type="binding site" evidence="1">
    <location>
        <position position="811"/>
    </location>
    <ligand>
        <name>Zn(2+)</name>
        <dbReference type="ChEBI" id="CHEBI:29105"/>
        <label>2</label>
    </ligand>
</feature>
<feature type="binding site" evidence="1">
    <location>
        <position position="813"/>
    </location>
    <ligand>
        <name>Zn(2+)</name>
        <dbReference type="ChEBI" id="CHEBI:29105"/>
        <label>3</label>
    </ligand>
</feature>
<feature type="binding site" evidence="1">
    <location>
        <position position="818"/>
    </location>
    <ligand>
        <name>Zn(2+)</name>
        <dbReference type="ChEBI" id="CHEBI:29105"/>
        <label>3</label>
    </ligand>
</feature>
<feature type="binding site" evidence="1">
    <location>
        <begin position="839"/>
        <end position="841"/>
    </location>
    <ligand>
        <name>S-adenosyl-L-methionine</name>
        <dbReference type="ChEBI" id="CHEBI:59789"/>
    </ligand>
</feature>
<feature type="binding site" evidence="6">
    <location>
        <position position="877"/>
    </location>
    <ligand>
        <name>S-adenosyl-L-methionine</name>
        <dbReference type="ChEBI" id="CHEBI:59789"/>
    </ligand>
</feature>
<feature type="binding site" evidence="6">
    <location>
        <position position="879"/>
    </location>
    <ligand>
        <name>S-adenosyl-L-methionine</name>
        <dbReference type="ChEBI" id="CHEBI:59789"/>
    </ligand>
</feature>
<feature type="binding site" evidence="6">
    <location>
        <position position="1198"/>
    </location>
    <ligand>
        <name>S-adenosyl-L-methionine</name>
        <dbReference type="ChEBI" id="CHEBI:59789"/>
    </ligand>
</feature>
<feature type="binding site" evidence="1">
    <location>
        <begin position="1201"/>
        <end position="1202"/>
    </location>
    <ligand>
        <name>S-adenosyl-L-methionine</name>
        <dbReference type="ChEBI" id="CHEBI:59789"/>
    </ligand>
</feature>
<feature type="binding site" evidence="1">
    <location>
        <position position="1204"/>
    </location>
    <ligand>
        <name>Zn(2+)</name>
        <dbReference type="ChEBI" id="CHEBI:29105"/>
        <label>4</label>
    </ligand>
</feature>
<feature type="binding site" evidence="1">
    <location>
        <position position="1257"/>
    </location>
    <ligand>
        <name>Zn(2+)</name>
        <dbReference type="ChEBI" id="CHEBI:29105"/>
        <label>4</label>
    </ligand>
</feature>
<feature type="binding site" evidence="1">
    <location>
        <position position="1259"/>
    </location>
    <ligand>
        <name>Zn(2+)</name>
        <dbReference type="ChEBI" id="CHEBI:29105"/>
        <label>4</label>
    </ligand>
</feature>
<feature type="binding site" evidence="1">
    <location>
        <position position="1264"/>
    </location>
    <ligand>
        <name>Zn(2+)</name>
        <dbReference type="ChEBI" id="CHEBI:29105"/>
        <label>4</label>
    </ligand>
</feature>
<protein>
    <recommendedName>
        <fullName>Histone-lysine N-methyltransferase SETDB1</fullName>
        <ecNumber>2.1.1.366</ecNumber>
    </recommendedName>
    <alternativeName>
        <fullName>SET domain bifurcated 1</fullName>
    </alternativeName>
</protein>